<protein>
    <recommendedName>
        <fullName>Protocadherin beta-1</fullName>
        <shortName>PCDH-beta-1</shortName>
    </recommendedName>
</protein>
<name>PCDB1_HUMAN</name>
<evidence type="ECO:0000250" key="1"/>
<evidence type="ECO:0000255" key="2"/>
<evidence type="ECO:0000255" key="3">
    <source>
        <dbReference type="PROSITE-ProRule" id="PRU00043"/>
    </source>
</evidence>
<evidence type="ECO:0000256" key="4">
    <source>
        <dbReference type="SAM" id="MobiDB-lite"/>
    </source>
</evidence>
<evidence type="ECO:0000269" key="5">
    <source>
    </source>
</evidence>
<organism>
    <name type="scientific">Homo sapiens</name>
    <name type="common">Human</name>
    <dbReference type="NCBI Taxonomy" id="9606"/>
    <lineage>
        <taxon>Eukaryota</taxon>
        <taxon>Metazoa</taxon>
        <taxon>Chordata</taxon>
        <taxon>Craniata</taxon>
        <taxon>Vertebrata</taxon>
        <taxon>Euteleostomi</taxon>
        <taxon>Mammalia</taxon>
        <taxon>Eutheria</taxon>
        <taxon>Euarchontoglires</taxon>
        <taxon>Primates</taxon>
        <taxon>Haplorrhini</taxon>
        <taxon>Catarrhini</taxon>
        <taxon>Hominidae</taxon>
        <taxon>Homo</taxon>
    </lineage>
</organism>
<dbReference type="EMBL" id="AF152488">
    <property type="protein sequence ID" value="AAD43749.1"/>
    <property type="molecule type" value="mRNA"/>
</dbReference>
<dbReference type="EMBL" id="CH471062">
    <property type="protein sequence ID" value="EAW61985.1"/>
    <property type="molecule type" value="Genomic_DNA"/>
</dbReference>
<dbReference type="EMBL" id="BC112096">
    <property type="protein sequence ID" value="AAI12097.1"/>
    <property type="molecule type" value="mRNA"/>
</dbReference>
<dbReference type="EMBL" id="BC112098">
    <property type="protein sequence ID" value="AAI12099.1"/>
    <property type="molecule type" value="mRNA"/>
</dbReference>
<dbReference type="CCDS" id="CCDS4243.1"/>
<dbReference type="RefSeq" id="NP_037472.2">
    <property type="nucleotide sequence ID" value="NM_013340.3"/>
</dbReference>
<dbReference type="SMR" id="Q9Y5F3"/>
<dbReference type="BioGRID" id="118971">
    <property type="interactions" value="20"/>
</dbReference>
<dbReference type="FunCoup" id="Q9Y5F3">
    <property type="interactions" value="1"/>
</dbReference>
<dbReference type="IntAct" id="Q9Y5F3">
    <property type="interactions" value="18"/>
</dbReference>
<dbReference type="STRING" id="9606.ENSP00000307234"/>
<dbReference type="GlyCosmos" id="Q9Y5F3">
    <property type="glycosylation" value="5 sites, No reported glycans"/>
</dbReference>
<dbReference type="GlyGen" id="Q9Y5F3">
    <property type="glycosylation" value="5 sites"/>
</dbReference>
<dbReference type="iPTMnet" id="Q9Y5F3"/>
<dbReference type="PhosphoSitePlus" id="Q9Y5F3"/>
<dbReference type="BioMuta" id="PCDHB1"/>
<dbReference type="DMDM" id="205371811"/>
<dbReference type="jPOST" id="Q9Y5F3"/>
<dbReference type="MassIVE" id="Q9Y5F3"/>
<dbReference type="PaxDb" id="9606-ENSP00000307234"/>
<dbReference type="PeptideAtlas" id="Q9Y5F3"/>
<dbReference type="ProteomicsDB" id="86352"/>
<dbReference type="Antibodypedia" id="27174">
    <property type="antibodies" value="82 antibodies from 15 providers"/>
</dbReference>
<dbReference type="DNASU" id="29930"/>
<dbReference type="Ensembl" id="ENST00000306549.6">
    <property type="protein sequence ID" value="ENSP00000307234.4"/>
    <property type="gene ID" value="ENSG00000171815.6"/>
</dbReference>
<dbReference type="Ensembl" id="ENST00000708334.1">
    <property type="protein sequence ID" value="ENSP00000517176.1"/>
    <property type="gene ID" value="ENSG00000291669.1"/>
</dbReference>
<dbReference type="GeneID" id="29930"/>
<dbReference type="KEGG" id="hsa:29930"/>
<dbReference type="MANE-Select" id="ENST00000306549.6">
    <property type="protein sequence ID" value="ENSP00000307234.4"/>
    <property type="RefSeq nucleotide sequence ID" value="NM_013340.4"/>
    <property type="RefSeq protein sequence ID" value="NP_037472.2"/>
</dbReference>
<dbReference type="UCSC" id="uc003lik.3">
    <property type="organism name" value="human"/>
</dbReference>
<dbReference type="AGR" id="HGNC:8680"/>
<dbReference type="CTD" id="29930"/>
<dbReference type="DisGeNET" id="29930"/>
<dbReference type="GeneCards" id="PCDHB1"/>
<dbReference type="HGNC" id="HGNC:8680">
    <property type="gene designation" value="PCDHB1"/>
</dbReference>
<dbReference type="HPA" id="ENSG00000171815">
    <property type="expression patterns" value="Tissue enhanced (skeletal)"/>
</dbReference>
<dbReference type="MalaCards" id="PCDHB1"/>
<dbReference type="MIM" id="604967">
    <property type="type" value="gene"/>
</dbReference>
<dbReference type="MIM" id="606327">
    <property type="type" value="gene"/>
</dbReference>
<dbReference type="neXtProt" id="NX_Q9Y5F3"/>
<dbReference type="OpenTargets" id="ENSG00000171815"/>
<dbReference type="PharmGKB" id="PA33025"/>
<dbReference type="VEuPathDB" id="HostDB:ENSG00000171815"/>
<dbReference type="eggNOG" id="KOG3594">
    <property type="taxonomic scope" value="Eukaryota"/>
</dbReference>
<dbReference type="GeneTree" id="ENSGT00940000162745"/>
<dbReference type="HOGENOM" id="CLU_006480_3_2_1"/>
<dbReference type="InParanoid" id="Q9Y5F3"/>
<dbReference type="OMA" id="ERDPMMQ"/>
<dbReference type="OrthoDB" id="6252479at2759"/>
<dbReference type="PAN-GO" id="Q9Y5F3">
    <property type="GO annotations" value="2 GO annotations based on evolutionary models"/>
</dbReference>
<dbReference type="PhylomeDB" id="Q9Y5F3"/>
<dbReference type="TreeFam" id="TF332299"/>
<dbReference type="PathwayCommons" id="Q9Y5F3"/>
<dbReference type="BioGRID-ORCS" id="29930">
    <property type="hits" value="8 hits in 1107 CRISPR screens"/>
</dbReference>
<dbReference type="GenomeRNAi" id="29930"/>
<dbReference type="Pharos" id="Q9Y5F3">
    <property type="development level" value="Tdark"/>
</dbReference>
<dbReference type="PRO" id="PR:Q9Y5F3"/>
<dbReference type="Proteomes" id="UP000005640">
    <property type="component" value="Chromosome 5"/>
</dbReference>
<dbReference type="RNAct" id="Q9Y5F3">
    <property type="molecule type" value="protein"/>
</dbReference>
<dbReference type="Bgee" id="ENSG00000171815">
    <property type="expression patterns" value="Expressed in primordial germ cell in gonad and 5 other cell types or tissues"/>
</dbReference>
<dbReference type="GO" id="GO:0005886">
    <property type="term" value="C:plasma membrane"/>
    <property type="evidence" value="ECO:0000318"/>
    <property type="project" value="GO_Central"/>
</dbReference>
<dbReference type="GO" id="GO:0005509">
    <property type="term" value="F:calcium ion binding"/>
    <property type="evidence" value="ECO:0007669"/>
    <property type="project" value="InterPro"/>
</dbReference>
<dbReference type="GO" id="GO:0007155">
    <property type="term" value="P:cell adhesion"/>
    <property type="evidence" value="ECO:0000318"/>
    <property type="project" value="GO_Central"/>
</dbReference>
<dbReference type="GO" id="GO:0007156">
    <property type="term" value="P:homophilic cell adhesion via plasma membrane adhesion molecules"/>
    <property type="evidence" value="ECO:0007669"/>
    <property type="project" value="InterPro"/>
</dbReference>
<dbReference type="GO" id="GO:0007399">
    <property type="term" value="P:nervous system development"/>
    <property type="evidence" value="ECO:0007669"/>
    <property type="project" value="UniProtKB-ARBA"/>
</dbReference>
<dbReference type="CDD" id="cd11304">
    <property type="entry name" value="Cadherin_repeat"/>
    <property type="match status" value="5"/>
</dbReference>
<dbReference type="FunFam" id="2.60.40.60:FF:000001">
    <property type="entry name" value="Protocadherin alpha 2"/>
    <property type="match status" value="1"/>
</dbReference>
<dbReference type="FunFam" id="2.60.40.60:FF:000002">
    <property type="entry name" value="Protocadherin alpha 2"/>
    <property type="match status" value="1"/>
</dbReference>
<dbReference type="FunFam" id="2.60.40.60:FF:000003">
    <property type="entry name" value="Protocadherin alpha 2"/>
    <property type="match status" value="1"/>
</dbReference>
<dbReference type="FunFam" id="2.60.40.60:FF:000006">
    <property type="entry name" value="Protocadherin alpha 2"/>
    <property type="match status" value="1"/>
</dbReference>
<dbReference type="FunFam" id="2.60.40.60:FF:000127">
    <property type="entry name" value="Protocadherin beta 1"/>
    <property type="match status" value="1"/>
</dbReference>
<dbReference type="FunFam" id="2.60.40.60:FF:000018">
    <property type="entry name" value="Protocadherin gamma c3"/>
    <property type="match status" value="1"/>
</dbReference>
<dbReference type="Gene3D" id="2.60.40.60">
    <property type="entry name" value="Cadherins"/>
    <property type="match status" value="6"/>
</dbReference>
<dbReference type="InterPro" id="IPR002126">
    <property type="entry name" value="Cadherin-like_dom"/>
</dbReference>
<dbReference type="InterPro" id="IPR015919">
    <property type="entry name" value="Cadherin-like_sf"/>
</dbReference>
<dbReference type="InterPro" id="IPR032455">
    <property type="entry name" value="Cadherin_C"/>
</dbReference>
<dbReference type="InterPro" id="IPR020894">
    <property type="entry name" value="Cadherin_CS"/>
</dbReference>
<dbReference type="InterPro" id="IPR013164">
    <property type="entry name" value="Cadherin_N"/>
</dbReference>
<dbReference type="InterPro" id="IPR050174">
    <property type="entry name" value="Protocadherin/Cadherin-CA"/>
</dbReference>
<dbReference type="PANTHER" id="PTHR24028">
    <property type="entry name" value="CADHERIN-87A"/>
    <property type="match status" value="1"/>
</dbReference>
<dbReference type="PANTHER" id="PTHR24028:SF118">
    <property type="entry name" value="PROTOCADHERIN BETA-1"/>
    <property type="match status" value="1"/>
</dbReference>
<dbReference type="Pfam" id="PF00028">
    <property type="entry name" value="Cadherin"/>
    <property type="match status" value="5"/>
</dbReference>
<dbReference type="Pfam" id="PF08266">
    <property type="entry name" value="Cadherin_2"/>
    <property type="match status" value="1"/>
</dbReference>
<dbReference type="Pfam" id="PF16492">
    <property type="entry name" value="Cadherin_C_2"/>
    <property type="match status" value="1"/>
</dbReference>
<dbReference type="PRINTS" id="PR00205">
    <property type="entry name" value="CADHERIN"/>
</dbReference>
<dbReference type="SMART" id="SM00112">
    <property type="entry name" value="CA"/>
    <property type="match status" value="6"/>
</dbReference>
<dbReference type="SUPFAM" id="SSF49313">
    <property type="entry name" value="Cadherin-like"/>
    <property type="match status" value="6"/>
</dbReference>
<dbReference type="PROSITE" id="PS00232">
    <property type="entry name" value="CADHERIN_1"/>
    <property type="match status" value="5"/>
</dbReference>
<dbReference type="PROSITE" id="PS50268">
    <property type="entry name" value="CADHERIN_2"/>
    <property type="match status" value="6"/>
</dbReference>
<accession>Q9Y5F3</accession>
<accession>Q2M257</accession>
<sequence length="818" mass="90491">MAGTRRKSLQNRQVGSLLIFLCISVGDATTIRYSVAEEMESGSFVANVAKDLGLEVGKLAARGARLVSEGNKMHFRLHRKTGDLFVKEKLDRESLCGKADPCVLHFEVVLVEPLQSFRAEVRVFDINDNAPVFLNKEPLLKIPESTPLGSRFPLQSAQDLDVGLNGLQNYTLSANGYFHLHTRFCSHGPKYAELVLNKPLDREEQPEVNLTITAVDGGSPPKSGTAHIHVVVLDVNDHVPQFSRLVYRAQVSENSPNGSLVATVTAVDLDEGTNKAITYSLAQNPEAILKTFQIDPQNGEVRLRGPLDFEAIETYDIDIQATDGGGLSAHSKVLVEVVDVNDNPPEVMVSSVSSPLPEDSPPQTVVALFTIRDRDIRVGGKVTCFLREDLPFVIKPTFGNSYSLVTDRSLDREEVSGYNITIVAMDTGPPSLSAETMIEVLISDVNDNPPIFREDSYILTVRENNSPAVFIGKVHAEDLDLGENAQITYSLLPPKNGDLSVFAYISINSGNGKLYALRTMDYEAIQDFQFVVKATDGGFLSLSSQVTVRVVVLDDNDNRPMILYPLQNGTLPCNDLVPRSAEAGYLVTKVVAVDGDSGQNSWLSYHLLKATDLGLFSVQRQNGEIHTLRQISERDPMMQKLIILVQDHGQPALSTTVSLNILLVDGFSEPYLQFQDPTKHSRKVNPSTKYLVISLVILSFLFLLSVIVIFIIHVYQKIKYREKFTIQEHFYDDCNFSNNLVQGQGNGSLSRPCPYEMCSATGTGNSEFRFLKRFMPNFPFPHATGEIKMEAGSSLPPNSDRNKSQRLEGHDQVSDDYM</sequence>
<keyword id="KW-0106">Calcium</keyword>
<keyword id="KW-0130">Cell adhesion</keyword>
<keyword id="KW-1003">Cell membrane</keyword>
<keyword id="KW-0325">Glycoprotein</keyword>
<keyword id="KW-0472">Membrane</keyword>
<keyword id="KW-1267">Proteomics identification</keyword>
<keyword id="KW-1185">Reference proteome</keyword>
<keyword id="KW-0677">Repeat</keyword>
<keyword id="KW-0732">Signal</keyword>
<keyword id="KW-0812">Transmembrane</keyword>
<keyword id="KW-1133">Transmembrane helix</keyword>
<proteinExistence type="evidence at protein level"/>
<comment type="function">
    <text>Potential calcium-dependent cell-adhesion protein. May be involved in the establishment and maintenance of specific neuronal connections in the brain.</text>
</comment>
<comment type="subcellular location">
    <subcellularLocation>
        <location evidence="1">Cell membrane</location>
        <topology evidence="1">Single-pass type I membrane protein</topology>
    </subcellularLocation>
</comment>
<gene>
    <name type="primary">PCDHB1</name>
</gene>
<reference key="1">
    <citation type="journal article" date="1999" name="Cell">
        <title>A striking organization of a large family of human neural cadherin-like cell adhesion genes.</title>
        <authorList>
            <person name="Wu Q."/>
            <person name="Maniatis T."/>
        </authorList>
    </citation>
    <scope>NUCLEOTIDE SEQUENCE [MRNA]</scope>
    <scope>VARIANT LEU-778</scope>
</reference>
<reference key="2">
    <citation type="submission" date="2005-09" db="EMBL/GenBank/DDBJ databases">
        <authorList>
            <person name="Mural R.J."/>
            <person name="Istrail S."/>
            <person name="Sutton G.G."/>
            <person name="Florea L."/>
            <person name="Halpern A.L."/>
            <person name="Mobarry C.M."/>
            <person name="Lippert R."/>
            <person name="Walenz B."/>
            <person name="Shatkay H."/>
            <person name="Dew I."/>
            <person name="Miller J.R."/>
            <person name="Flanigan M.J."/>
            <person name="Edwards N.J."/>
            <person name="Bolanos R."/>
            <person name="Fasulo D."/>
            <person name="Halldorsson B.V."/>
            <person name="Hannenhalli S."/>
            <person name="Turner R."/>
            <person name="Yooseph S."/>
            <person name="Lu F."/>
            <person name="Nusskern D.R."/>
            <person name="Shue B.C."/>
            <person name="Zheng X.H."/>
            <person name="Zhong F."/>
            <person name="Delcher A.L."/>
            <person name="Huson D.H."/>
            <person name="Kravitz S.A."/>
            <person name="Mouchard L."/>
            <person name="Reinert K."/>
            <person name="Remington K.A."/>
            <person name="Clark A.G."/>
            <person name="Waterman M.S."/>
            <person name="Eichler E.E."/>
            <person name="Adams M.D."/>
            <person name="Hunkapiller M.W."/>
            <person name="Myers E.W."/>
            <person name="Venter J.C."/>
        </authorList>
    </citation>
    <scope>NUCLEOTIDE SEQUENCE [LARGE SCALE GENOMIC DNA]</scope>
</reference>
<reference key="3">
    <citation type="journal article" date="2004" name="Genome Res.">
        <title>The status, quality, and expansion of the NIH full-length cDNA project: the Mammalian Gene Collection (MGC).</title>
        <authorList>
            <consortium name="The MGC Project Team"/>
        </authorList>
    </citation>
    <scope>NUCLEOTIDE SEQUENCE [LARGE SCALE MRNA]</scope>
    <source>
        <tissue>Brain</tissue>
    </source>
</reference>
<feature type="signal peptide" evidence="2">
    <location>
        <begin position="1"/>
        <end position="28"/>
    </location>
</feature>
<feature type="chain" id="PRO_0000003914" description="Protocadherin beta-1">
    <location>
        <begin position="29"/>
        <end position="818"/>
    </location>
</feature>
<feature type="topological domain" description="Extracellular" evidence="2">
    <location>
        <begin position="29"/>
        <end position="691"/>
    </location>
</feature>
<feature type="transmembrane region" description="Helical" evidence="2">
    <location>
        <begin position="692"/>
        <end position="712"/>
    </location>
</feature>
<feature type="topological domain" description="Cytoplasmic" evidence="2">
    <location>
        <begin position="713"/>
        <end position="818"/>
    </location>
</feature>
<feature type="domain" description="Cadherin 1" evidence="3">
    <location>
        <begin position="35"/>
        <end position="133"/>
    </location>
</feature>
<feature type="domain" description="Cadherin 2" evidence="3">
    <location>
        <begin position="138"/>
        <end position="242"/>
    </location>
</feature>
<feature type="domain" description="Cadherin 3" evidence="3">
    <location>
        <begin position="243"/>
        <end position="347"/>
    </location>
</feature>
<feature type="domain" description="Cadherin 4" evidence="3">
    <location>
        <begin position="348"/>
        <end position="452"/>
    </location>
</feature>
<feature type="domain" description="Cadherin 5" evidence="3">
    <location>
        <begin position="457"/>
        <end position="562"/>
    </location>
</feature>
<feature type="domain" description="Cadherin 6" evidence="3">
    <location>
        <begin position="577"/>
        <end position="672"/>
    </location>
</feature>
<feature type="region of interest" description="Disordered" evidence="4">
    <location>
        <begin position="789"/>
        <end position="818"/>
    </location>
</feature>
<feature type="compositionally biased region" description="Basic and acidic residues" evidence="4">
    <location>
        <begin position="800"/>
        <end position="818"/>
    </location>
</feature>
<feature type="glycosylation site" description="N-linked (GlcNAc...) asparagine" evidence="2">
    <location>
        <position position="169"/>
    </location>
</feature>
<feature type="glycosylation site" description="N-linked (GlcNAc...) asparagine" evidence="2">
    <location>
        <position position="209"/>
    </location>
</feature>
<feature type="glycosylation site" description="N-linked (GlcNAc...) asparagine" evidence="2">
    <location>
        <position position="257"/>
    </location>
</feature>
<feature type="glycosylation site" description="N-linked (GlcNAc...) asparagine" evidence="2">
    <location>
        <position position="419"/>
    </location>
</feature>
<feature type="glycosylation site" description="N-linked (GlcNAc...) asparagine" evidence="2">
    <location>
        <position position="568"/>
    </location>
</feature>
<feature type="sequence variant" id="VAR_048541" description="In dbSNP:rs2233591.">
    <original>F</original>
    <variation>L</variation>
    <location>
        <position position="385"/>
    </location>
</feature>
<feature type="sequence variant" id="VAR_048542" description="In dbSNP:rs2233592.">
    <original>L</original>
    <variation>F</variation>
    <location>
        <position position="390"/>
    </location>
</feature>
<feature type="sequence variant" id="VAR_048543" description="In dbSNP:rs17208383.">
    <original>A</original>
    <variation>V</variation>
    <location>
        <position position="524"/>
    </location>
</feature>
<feature type="sequence variant" id="VAR_048544" description="In dbSNP:rs10476822.">
    <original>T</original>
    <variation>I</variation>
    <location>
        <position position="611"/>
    </location>
</feature>
<feature type="sequence variant" id="VAR_048545" description="In dbSNP:rs31738.">
    <original>I</original>
    <variation>T</variation>
    <location>
        <position position="712"/>
    </location>
</feature>
<feature type="sequence variant" id="VAR_048546" description="In dbSNP:rs2233595.">
    <original>K</original>
    <variation>I</variation>
    <location>
        <position position="719"/>
    </location>
</feature>
<feature type="sequence variant" id="VAR_048547" description="In dbSNP:rs246679." evidence="5">
    <original>F</original>
    <variation>L</variation>
    <location>
        <position position="778"/>
    </location>
</feature>